<evidence type="ECO:0000250" key="1"/>
<evidence type="ECO:0000250" key="2">
    <source>
        <dbReference type="UniProtKB" id="P61898"/>
    </source>
</evidence>
<evidence type="ECO:0000250" key="3">
    <source>
        <dbReference type="UniProtKB" id="P61899"/>
    </source>
</evidence>
<evidence type="ECO:0000255" key="4"/>
<evidence type="ECO:0000256" key="5">
    <source>
        <dbReference type="SAM" id="MobiDB-lite"/>
    </source>
</evidence>
<evidence type="ECO:0000269" key="6">
    <source>
    </source>
</evidence>
<evidence type="ECO:0000305" key="7"/>
<dbReference type="EMBL" id="S56212">
    <property type="protein sequence ID" value="AAB25729.1"/>
    <property type="molecule type" value="mRNA"/>
</dbReference>
<dbReference type="PIR" id="I51193">
    <property type="entry name" value="I51193"/>
</dbReference>
<dbReference type="SMR" id="P34128"/>
<dbReference type="GO" id="GO:0030424">
    <property type="term" value="C:axon"/>
    <property type="evidence" value="ECO:0007669"/>
    <property type="project" value="TreeGrafter"/>
</dbReference>
<dbReference type="GO" id="GO:0030425">
    <property type="term" value="C:dendrite"/>
    <property type="evidence" value="ECO:0007669"/>
    <property type="project" value="TreeGrafter"/>
</dbReference>
<dbReference type="GO" id="GO:0005615">
    <property type="term" value="C:extracellular space"/>
    <property type="evidence" value="ECO:0007669"/>
    <property type="project" value="TreeGrafter"/>
</dbReference>
<dbReference type="GO" id="GO:0008021">
    <property type="term" value="C:synaptic vesicle"/>
    <property type="evidence" value="ECO:0007669"/>
    <property type="project" value="TreeGrafter"/>
</dbReference>
<dbReference type="GO" id="GO:0008083">
    <property type="term" value="F:growth factor activity"/>
    <property type="evidence" value="ECO:0007669"/>
    <property type="project" value="UniProtKB-KW"/>
</dbReference>
<dbReference type="GO" id="GO:0008289">
    <property type="term" value="F:lipid binding"/>
    <property type="evidence" value="ECO:0007669"/>
    <property type="project" value="UniProtKB-KW"/>
</dbReference>
<dbReference type="GO" id="GO:0008191">
    <property type="term" value="F:metalloendopeptidase inhibitor activity"/>
    <property type="evidence" value="ECO:0000250"/>
    <property type="project" value="UniProtKB"/>
</dbReference>
<dbReference type="GO" id="GO:0005163">
    <property type="term" value="F:nerve growth factor receptor binding"/>
    <property type="evidence" value="ECO:0007669"/>
    <property type="project" value="TreeGrafter"/>
</dbReference>
<dbReference type="GO" id="GO:0090729">
    <property type="term" value="F:toxin activity"/>
    <property type="evidence" value="ECO:0007669"/>
    <property type="project" value="UniProtKB-KW"/>
</dbReference>
<dbReference type="GO" id="GO:0007169">
    <property type="term" value="P:cell surface receptor protein tyrosine kinase signaling pathway"/>
    <property type="evidence" value="ECO:0007669"/>
    <property type="project" value="TreeGrafter"/>
</dbReference>
<dbReference type="GO" id="GO:0050804">
    <property type="term" value="P:modulation of chemical synaptic transmission"/>
    <property type="evidence" value="ECO:0007669"/>
    <property type="project" value="TreeGrafter"/>
</dbReference>
<dbReference type="GO" id="GO:0043524">
    <property type="term" value="P:negative regulation of neuron apoptotic process"/>
    <property type="evidence" value="ECO:0007669"/>
    <property type="project" value="TreeGrafter"/>
</dbReference>
<dbReference type="GO" id="GO:0021675">
    <property type="term" value="P:nerve development"/>
    <property type="evidence" value="ECO:0007669"/>
    <property type="project" value="TreeGrafter"/>
</dbReference>
<dbReference type="GO" id="GO:0038180">
    <property type="term" value="P:nerve growth factor signaling pathway"/>
    <property type="evidence" value="ECO:0007669"/>
    <property type="project" value="TreeGrafter"/>
</dbReference>
<dbReference type="GO" id="GO:0048812">
    <property type="term" value="P:neuron projection morphogenesis"/>
    <property type="evidence" value="ECO:0007669"/>
    <property type="project" value="TreeGrafter"/>
</dbReference>
<dbReference type="FunFam" id="2.10.90.10:FF:000002">
    <property type="entry name" value="Brain-derived neurotrophic factor"/>
    <property type="match status" value="1"/>
</dbReference>
<dbReference type="Gene3D" id="2.10.90.10">
    <property type="entry name" value="Cystine-knot cytokines"/>
    <property type="match status" value="1"/>
</dbReference>
<dbReference type="InterPro" id="IPR029034">
    <property type="entry name" value="Cystine-knot_cytokine"/>
</dbReference>
<dbReference type="InterPro" id="IPR020408">
    <property type="entry name" value="Nerve_growth_factor-like"/>
</dbReference>
<dbReference type="InterPro" id="IPR002072">
    <property type="entry name" value="Nerve_growth_factor-rel"/>
</dbReference>
<dbReference type="InterPro" id="IPR020425">
    <property type="entry name" value="Nerve_growth_factor_bsu"/>
</dbReference>
<dbReference type="InterPro" id="IPR019846">
    <property type="entry name" value="Nerve_growth_factor_CS"/>
</dbReference>
<dbReference type="InterPro" id="IPR020433">
    <property type="entry name" value="Venom_nerve_growth_factor"/>
</dbReference>
<dbReference type="PANTHER" id="PTHR11589:SF10">
    <property type="entry name" value="BETA-NERVE GROWTH FACTOR"/>
    <property type="match status" value="1"/>
</dbReference>
<dbReference type="PANTHER" id="PTHR11589">
    <property type="entry name" value="NERVE GROWTH FACTOR NGF -RELATED"/>
    <property type="match status" value="1"/>
</dbReference>
<dbReference type="Pfam" id="PF00243">
    <property type="entry name" value="NGF"/>
    <property type="match status" value="1"/>
</dbReference>
<dbReference type="PIRSF" id="PIRSF001789">
    <property type="entry name" value="NGF"/>
    <property type="match status" value="1"/>
</dbReference>
<dbReference type="PRINTS" id="PR00268">
    <property type="entry name" value="NGF"/>
</dbReference>
<dbReference type="PRINTS" id="PR01913">
    <property type="entry name" value="NGFBETA"/>
</dbReference>
<dbReference type="PRINTS" id="PR01917">
    <property type="entry name" value="VENOMNGF"/>
</dbReference>
<dbReference type="SMART" id="SM00140">
    <property type="entry name" value="NGF"/>
    <property type="match status" value="1"/>
</dbReference>
<dbReference type="SUPFAM" id="SSF57501">
    <property type="entry name" value="Cystine-knot cytokines"/>
    <property type="match status" value="1"/>
</dbReference>
<dbReference type="PROSITE" id="PS00248">
    <property type="entry name" value="NGF_1"/>
    <property type="match status" value="1"/>
</dbReference>
<dbReference type="PROSITE" id="PS50270">
    <property type="entry name" value="NGF_2"/>
    <property type="match status" value="1"/>
</dbReference>
<proteinExistence type="evidence at protein level"/>
<protein>
    <recommendedName>
        <fullName>Venom nerve growth factor</fullName>
        <shortName>v-NGF</shortName>
        <shortName>vNGF</shortName>
    </recommendedName>
</protein>
<name>NGFV_BUNMU</name>
<organism>
    <name type="scientific">Bungarus multicinctus</name>
    <name type="common">Many-banded krait</name>
    <dbReference type="NCBI Taxonomy" id="8616"/>
    <lineage>
        <taxon>Eukaryota</taxon>
        <taxon>Metazoa</taxon>
        <taxon>Chordata</taxon>
        <taxon>Craniata</taxon>
        <taxon>Vertebrata</taxon>
        <taxon>Euteleostomi</taxon>
        <taxon>Lepidosauria</taxon>
        <taxon>Squamata</taxon>
        <taxon>Bifurcata</taxon>
        <taxon>Unidentata</taxon>
        <taxon>Episquamata</taxon>
        <taxon>Toxicofera</taxon>
        <taxon>Serpentes</taxon>
        <taxon>Colubroidea</taxon>
        <taxon>Elapidae</taxon>
        <taxon>Bungarinae</taxon>
        <taxon>Bungarus</taxon>
    </lineage>
</organism>
<feature type="signal peptide" evidence="4">
    <location>
        <begin position="1"/>
        <end position="18"/>
    </location>
</feature>
<feature type="propeptide" id="PRO_0000019613" evidence="1">
    <location>
        <begin position="19"/>
        <end position="125"/>
    </location>
</feature>
<feature type="chain" id="PRO_0000019614" description="Venom nerve growth factor">
    <location>
        <begin position="126"/>
        <end position="243"/>
    </location>
</feature>
<feature type="region of interest" description="Disordered" evidence="5">
    <location>
        <begin position="47"/>
        <end position="70"/>
    </location>
</feature>
<feature type="compositionally biased region" description="Basic and acidic residues" evidence="5">
    <location>
        <begin position="47"/>
        <end position="66"/>
    </location>
</feature>
<feature type="glycosylation site" description="N-linked (GlcNAc...) asparagine" evidence="4">
    <location>
        <position position="148"/>
    </location>
</feature>
<feature type="disulfide bond" evidence="2">
    <location>
        <begin position="139"/>
        <end position="204"/>
    </location>
</feature>
<feature type="disulfide bond" evidence="2">
    <location>
        <begin position="182"/>
        <end position="232"/>
    </location>
</feature>
<feature type="disulfide bond" evidence="2">
    <location>
        <begin position="192"/>
        <end position="234"/>
    </location>
</feature>
<sequence>MSMLCYTLIIAFLIGIWAAPKSEDNVPLGSPAKSDFSDTNCAQTHEGLKTSRNTDQHHPTPKKSEDQELGSAANIIVDPKLFQKRRFQSPRVLFSTQPPPLSRDEQSVKFLDTEDTLNRNIWANNENHPVHNQGEHSVCDSISVWVTNKTKATDIKGNTVTVMVDVNLNNEVYKQYFFETKCRNPNPVPSGCRGIDSRHWNSYCTTTDTFVKALTMEGNRASWRFIRIDTACVCVISRKTENF</sequence>
<keyword id="KW-1015">Disulfide bond</keyword>
<keyword id="KW-0325">Glycoprotein</keyword>
<keyword id="KW-0339">Growth factor</keyword>
<keyword id="KW-0446">Lipid-binding</keyword>
<keyword id="KW-0481">Metalloenzyme inhibitor</keyword>
<keyword id="KW-0483">Metalloprotease inhibitor</keyword>
<keyword id="KW-0646">Protease inhibitor</keyword>
<keyword id="KW-0964">Secreted</keyword>
<keyword id="KW-0732">Signal</keyword>
<keyword id="KW-0800">Toxin</keyword>
<comment type="function">
    <text evidence="2 3">Nerve growth factor is important for the development and maintenance of the sympathetic and sensory nervous systems. It stimulates division and differentiation of sympathetic and embryonic sensory neurons as well as basal forebrain cholinergic neurons in the brain. Its relevance in the snake venom is not clear. However, it has been shown to inhibit metalloproteinase-dependent proteolysis of platelet glycoprotein Ib alpha, suggesting a metalloproteinase inhibition to prevent metalloprotease autodigestion and/or protection against prey proteases (By similarity). Binds a lipid between the two protein chains in the homodimer. The lipid-bound form promotes histamine relase from mouse mast cells, contrary to the lipid-free form (By similarity).</text>
</comment>
<comment type="subunit">
    <text evidence="6">Homodimer.</text>
</comment>
<comment type="subcellular location">
    <subcellularLocation>
        <location>Secreted</location>
    </subcellularLocation>
</comment>
<comment type="tissue specificity">
    <text>Expressed by the venom gland.</text>
</comment>
<comment type="similarity">
    <text evidence="7">Belongs to the NGF-beta family.</text>
</comment>
<reference key="1">
    <citation type="journal article" date="1993" name="Growth Factors">
        <title>Molecular cloning of a cDNA encoding a nerve growth factor precursor from the krait, Bungarus multicinctus.</title>
        <authorList>
            <person name="Danse J.-M."/>
            <person name="Garnier J.-M."/>
        </authorList>
    </citation>
    <scope>NUCLEOTIDE SEQUENCE [MRNA]</scope>
    <source>
        <tissue>Venom gland</tissue>
    </source>
</reference>
<reference key="2">
    <citation type="journal article" date="2011" name="Toxicon">
        <title>Molecular diversity of snake venom nerve growth factors.</title>
        <authorList>
            <person name="Trummal K."/>
            <person name="Tonismagi K."/>
            <person name="Paalme V."/>
            <person name="Jarvekulg L."/>
            <person name="Siigur J."/>
            <person name="Siigur E."/>
        </authorList>
    </citation>
    <scope>CHARACTERIZATION</scope>
    <scope>GLYCOSYLATION</scope>
    <source>
        <tissue>Venom</tissue>
    </source>
</reference>
<reference key="3">
    <citation type="journal article" date="1978" name="Biochim. Biophys. Acta">
        <title>Purification and characterization of nerve growth factor from the venom of Bungarus multicinctus.</title>
        <authorList>
            <person name="Furukawa S."/>
            <person name="Hayashi K."/>
        </authorList>
    </citation>
    <scope>SUBUNIT</scope>
</reference>
<accession>P34128</accession>